<organism>
    <name type="scientific">Murine pneumonia virus (strain 15)</name>
    <name type="common">MPV</name>
    <dbReference type="NCBI Taxonomy" id="296738"/>
    <lineage>
        <taxon>Viruses</taxon>
        <taxon>Riboviria</taxon>
        <taxon>Orthornavirae</taxon>
        <taxon>Negarnaviricota</taxon>
        <taxon>Haploviricotina</taxon>
        <taxon>Monjiviricetes</taxon>
        <taxon>Mononegavirales</taxon>
        <taxon>Pneumoviridae</taxon>
        <taxon>Orthopneumovirus</taxon>
        <taxon>Orthopneumovirus muris</taxon>
        <taxon>murine pneumonia virus</taxon>
    </lineage>
</organism>
<proteinExistence type="inferred from homology"/>
<name>MATRX_MPV15</name>
<evidence type="ECO:0000250" key="1">
    <source>
        <dbReference type="UniProtKB" id="P0DOE7"/>
    </source>
</evidence>
<evidence type="ECO:0000305" key="2"/>
<organismHost>
    <name type="scientific">Mus musculus</name>
    <name type="common">Mouse</name>
    <dbReference type="NCBI Taxonomy" id="10090"/>
</organismHost>
<comment type="function">
    <text evidence="1">Plays a crucial role in virus assembly into filaments and budding. Early in infection, localizes in the nucleus where it may inhibit host cell transcription. Later in infection, traffics to the cytoplasm to associate with inclusion bodies, the site of viral transcription and replication. During virus assembly and budding, acts as a bridge between the nucleocapsid and the lipid bilayer.</text>
</comment>
<comment type="subunit">
    <text evidence="1">Forms dimers. Forms higher-order oligomers. Interacts with glycoprotein G (via N-terminus). Interacts with protein M2-1; this interaction directs the matrix protein localization to cytoplasmic inclusions comprising viral proteins L, N, P, and M2-1 and mediates the matrix protein association with the nucleocapsid.</text>
</comment>
<comment type="subcellular location">
    <subcellularLocation>
        <location evidence="1">Virion</location>
    </subcellularLocation>
    <subcellularLocation>
        <location evidence="1">Host cytoplasm</location>
    </subcellularLocation>
    <subcellularLocation>
        <location evidence="1">Host nucleus</location>
    </subcellularLocation>
    <subcellularLocation>
        <location evidence="1">Host cell membrane</location>
        <topology evidence="1">Peripheral membrane protein</topology>
        <orientation evidence="1">Cytoplasmic side</orientation>
    </subcellularLocation>
    <text evidence="1">In the cytoplasm, associates with inclusion bodies. During bud formation, associates at the inner side of the plasma membrane of infected cells.</text>
</comment>
<comment type="similarity">
    <text evidence="2">Belongs to the pneumovirinae M protein family.</text>
</comment>
<protein>
    <recommendedName>
        <fullName>Matrix protein</fullName>
    </recommendedName>
    <alternativeName>
        <fullName evidence="1">M protein</fullName>
    </alternativeName>
</protein>
<sequence length="257" mass="28309">MEAYLVEMYHGVPYTAAVQLNLVEKHSANISLTVWIPMFQTSLPKNSVMDLLHDVTVICTQISTVHGPMIKVDLSSSNAGLATMPRQFLINAIIALDDWGNMDYEVPVAFDKKSFCVTILKPKNMLYTVPSITPTNRPTHELIAVCSFHNRVTLKSFNIPVFIRALYIRQQGLDSVEQAISSDVDHAITTARVAPYAGLTLVINITSTKGAFKLLKAGSQILAELGPYLTQVSLHDVIMNWKHTGTSYILKSSSTSG</sequence>
<keyword id="KW-1032">Host cell membrane</keyword>
<keyword id="KW-1035">Host cytoplasm</keyword>
<keyword id="KW-1043">Host membrane</keyword>
<keyword id="KW-1048">Host nucleus</keyword>
<keyword id="KW-0945">Host-virus interaction</keyword>
<keyword id="KW-0472">Membrane</keyword>
<keyword id="KW-1185">Reference proteome</keyword>
<keyword id="KW-0468">Viral matrix protein</keyword>
<keyword id="KW-0946">Virion</keyword>
<accession>Q5MKM5</accession>
<accession>Q50EV7</accession>
<feature type="chain" id="PRO_0000365790" description="Matrix protein">
    <location>
        <begin position="1"/>
        <end position="257"/>
    </location>
</feature>
<feature type="short sequence motif" description="Nuclear export signal" evidence="1">
    <location>
        <begin position="193"/>
        <end position="205"/>
    </location>
</feature>
<feature type="sequence variant">
    <original>Y</original>
    <variation>S</variation>
    <location>
        <position position="167"/>
    </location>
</feature>
<feature type="sequence variant">
    <original>G</original>
    <variation>D</variation>
    <location>
        <position position="172"/>
    </location>
</feature>
<gene>
    <name type="primary">M</name>
</gene>
<reference key="1">
    <citation type="journal article" date="1997" name="Virus Res.">
        <title>Nucleotide sequence of the genes encoding the matrix and small hydrophobic proteins of pneumonia virus of mice.</title>
        <authorList>
            <person name="Easton A.J."/>
            <person name="Chambers P."/>
        </authorList>
    </citation>
    <scope>NUCLEOTIDE SEQUENCE [GENOMIC RNA]</scope>
</reference>
<reference key="2">
    <citation type="journal article" date="2005" name="J. Gen. Virol.">
        <title>Genome sequence of the non-pathogenic strain 15 of pneumonia virus of mice and comparison with the genome of the pathogenic strain J3666.</title>
        <authorList>
            <person name="Thorpe L.C."/>
            <person name="Easton A.J."/>
        </authorList>
    </citation>
    <scope>NUCLEOTIDE SEQUENCE [GENOMIC RNA]</scope>
</reference>
<reference key="3">
    <citation type="journal article" date="2005" name="Virus Genes">
        <title>Complete sequence of the RNA genome of pneumonia virus of mice (PVM).</title>
        <authorList>
            <person name="Krempl C.D."/>
            <person name="Lamirande E.W."/>
            <person name="Collins P.L."/>
        </authorList>
    </citation>
    <scope>NUCLEOTIDE SEQUENCE [GENOMIC RNA]</scope>
</reference>
<dbReference type="EMBL" id="AY743910">
    <property type="protein sequence ID" value="AAW02837.1"/>
    <property type="molecule type" value="Genomic_RNA"/>
</dbReference>
<dbReference type="EMBL" id="AY729016">
    <property type="protein sequence ID" value="AAW79178.1"/>
    <property type="molecule type" value="Genomic_RNA"/>
</dbReference>
<dbReference type="SMR" id="Q5MKM5"/>
<dbReference type="Proteomes" id="UP000133604">
    <property type="component" value="Genome"/>
</dbReference>
<dbReference type="Proteomes" id="UP000147186">
    <property type="component" value="Segment"/>
</dbReference>
<dbReference type="GO" id="GO:0030430">
    <property type="term" value="C:host cell cytoplasm"/>
    <property type="evidence" value="ECO:0007669"/>
    <property type="project" value="UniProtKB-SubCell"/>
</dbReference>
<dbReference type="GO" id="GO:0042025">
    <property type="term" value="C:host cell nucleus"/>
    <property type="evidence" value="ECO:0007669"/>
    <property type="project" value="UniProtKB-SubCell"/>
</dbReference>
<dbReference type="GO" id="GO:0020002">
    <property type="term" value="C:host cell plasma membrane"/>
    <property type="evidence" value="ECO:0007669"/>
    <property type="project" value="UniProtKB-SubCell"/>
</dbReference>
<dbReference type="GO" id="GO:0016020">
    <property type="term" value="C:membrane"/>
    <property type="evidence" value="ECO:0007669"/>
    <property type="project" value="UniProtKB-KW"/>
</dbReference>
<dbReference type="GO" id="GO:0019031">
    <property type="term" value="C:viral envelope"/>
    <property type="evidence" value="ECO:0007669"/>
    <property type="project" value="InterPro"/>
</dbReference>
<dbReference type="GO" id="GO:0039660">
    <property type="term" value="F:structural constituent of virion"/>
    <property type="evidence" value="ECO:0007669"/>
    <property type="project" value="UniProtKB-KW"/>
</dbReference>
<dbReference type="GO" id="GO:0019068">
    <property type="term" value="P:virion assembly"/>
    <property type="evidence" value="ECO:0007669"/>
    <property type="project" value="InterPro"/>
</dbReference>
<dbReference type="Gene3D" id="2.70.20.30">
    <property type="entry name" value="HRSV-S2 matrix protein, N-terminal domain"/>
    <property type="match status" value="1"/>
</dbReference>
<dbReference type="InterPro" id="IPR055461">
    <property type="entry name" value="Matrix_Pneumo_C"/>
</dbReference>
<dbReference type="InterPro" id="IPR005056">
    <property type="entry name" value="MATRX_N_pneumovirus"/>
</dbReference>
<dbReference type="InterPro" id="IPR043062">
    <property type="entry name" value="Pneu_matrix_N"/>
</dbReference>
<dbReference type="Pfam" id="PF23766">
    <property type="entry name" value="Matrix_Pneumo_C"/>
    <property type="match status" value="1"/>
</dbReference>
<dbReference type="Pfam" id="PF03393">
    <property type="entry name" value="Matrix_Pneumo_N"/>
    <property type="match status" value="1"/>
</dbReference>